<organism>
    <name type="scientific">Bacillus cereus (strain 03BB102)</name>
    <dbReference type="NCBI Taxonomy" id="572264"/>
    <lineage>
        <taxon>Bacteria</taxon>
        <taxon>Bacillati</taxon>
        <taxon>Bacillota</taxon>
        <taxon>Bacilli</taxon>
        <taxon>Bacillales</taxon>
        <taxon>Bacillaceae</taxon>
        <taxon>Bacillus</taxon>
        <taxon>Bacillus cereus group</taxon>
    </lineage>
</organism>
<proteinExistence type="inferred from homology"/>
<name>Y1194_BACC3</name>
<comment type="subcellular location">
    <subcellularLocation>
        <location evidence="1">Cell membrane</location>
        <topology evidence="1">Multi-pass membrane protein</topology>
    </subcellularLocation>
</comment>
<comment type="similarity">
    <text evidence="1">Belongs to the UPF0344 family.</text>
</comment>
<dbReference type="EMBL" id="CP001407">
    <property type="protein sequence ID" value="ACO26968.1"/>
    <property type="molecule type" value="Genomic_DNA"/>
</dbReference>
<dbReference type="RefSeq" id="WP_000233492.1">
    <property type="nucleotide sequence ID" value="NZ_CP009318.1"/>
</dbReference>
<dbReference type="KEGG" id="bcx:BCA_1194"/>
<dbReference type="PATRIC" id="fig|572264.18.peg.1145"/>
<dbReference type="Proteomes" id="UP000002210">
    <property type="component" value="Chromosome"/>
</dbReference>
<dbReference type="GO" id="GO:0005886">
    <property type="term" value="C:plasma membrane"/>
    <property type="evidence" value="ECO:0007669"/>
    <property type="project" value="UniProtKB-SubCell"/>
</dbReference>
<dbReference type="HAMAP" id="MF_01536">
    <property type="entry name" value="UPF0344"/>
    <property type="match status" value="1"/>
</dbReference>
<dbReference type="InterPro" id="IPR010899">
    <property type="entry name" value="UPF0344"/>
</dbReference>
<dbReference type="NCBIfam" id="NF010194">
    <property type="entry name" value="PRK13673.1-1"/>
    <property type="match status" value="1"/>
</dbReference>
<dbReference type="Pfam" id="PF07457">
    <property type="entry name" value="DUF1516"/>
    <property type="match status" value="1"/>
</dbReference>
<evidence type="ECO:0000255" key="1">
    <source>
        <dbReference type="HAMAP-Rule" id="MF_01536"/>
    </source>
</evidence>
<gene>
    <name type="ordered locus">BCA_1194</name>
</gene>
<accession>C1EL62</accession>
<feature type="chain" id="PRO_1000185188" description="UPF0344 protein BCA_1194">
    <location>
        <begin position="1"/>
        <end position="121"/>
    </location>
</feature>
<feature type="transmembrane region" description="Helical" evidence="1">
    <location>
        <begin position="6"/>
        <end position="26"/>
    </location>
</feature>
<feature type="transmembrane region" description="Helical" evidence="1">
    <location>
        <begin position="38"/>
        <end position="58"/>
    </location>
</feature>
<feature type="transmembrane region" description="Helical" evidence="1">
    <location>
        <begin position="65"/>
        <end position="85"/>
    </location>
</feature>
<feature type="transmembrane region" description="Helical" evidence="1">
    <location>
        <begin position="92"/>
        <end position="112"/>
    </location>
</feature>
<reference key="1">
    <citation type="submission" date="2009-02" db="EMBL/GenBank/DDBJ databases">
        <title>Genome sequence of Bacillus cereus 03BB102.</title>
        <authorList>
            <person name="Dodson R.J."/>
            <person name="Jackson P."/>
            <person name="Munk A.C."/>
            <person name="Brettin T."/>
            <person name="Bruce D."/>
            <person name="Detter C."/>
            <person name="Tapia R."/>
            <person name="Han C."/>
            <person name="Sutton G."/>
            <person name="Sims D."/>
        </authorList>
    </citation>
    <scope>NUCLEOTIDE SEQUENCE [LARGE SCALE GENOMIC DNA]</scope>
    <source>
        <strain>03BB102</strain>
    </source>
</reference>
<keyword id="KW-1003">Cell membrane</keyword>
<keyword id="KW-0472">Membrane</keyword>
<keyword id="KW-0812">Transmembrane</keyword>
<keyword id="KW-1133">Transmembrane helix</keyword>
<protein>
    <recommendedName>
        <fullName evidence="1">UPF0344 protein BCA_1194</fullName>
    </recommendedName>
</protein>
<sequence length="121" mass="13451">MVHMHITAWALGLILFFVAYSLYSAGRKGKGVHMGLRLMYIIIIVTGFMLYMGIMKTATSNMHMWYGLKMVAGILVIGGMEMVLVKMSKNKATGAVWGLFIVALVAVFYLGLKLPIGWQVF</sequence>